<gene>
    <name evidence="6" type="primary">brlA</name>
    <name type="ORF">PCAMFM013_S028g000076</name>
</gene>
<name>BRLA_PENC3</name>
<reference key="1">
    <citation type="journal article" date="2008" name="Res. Microbiol.">
        <title>Cloning and expression of genes involved in conidiation and surface properties of Penicillium camemberti grown in liquid and solid cultures.</title>
        <authorList>
            <person name="Boualem K."/>
            <person name="Wache Y."/>
            <person name="Garmyn D."/>
            <person name="Karbowiak T."/>
            <person name="Durand A."/>
            <person name="Gervais P."/>
            <person name="Cavin J.F."/>
        </authorList>
    </citation>
    <scope>NUCLEOTIDE SEQUENCE [GENOMIC DNA] OF 4-341</scope>
    <scope>INDUCTION</scope>
    <source>
        <strain>ENS1</strain>
    </source>
</reference>
<reference key="2">
    <citation type="journal article" date="2014" name="Nat. Commun.">
        <title>Multiple recent horizontal transfers of a large genomic region in cheese making fungi.</title>
        <authorList>
            <person name="Cheeseman K."/>
            <person name="Ropars J."/>
            <person name="Renault P."/>
            <person name="Dupont J."/>
            <person name="Gouzy J."/>
            <person name="Branca A."/>
            <person name="Abraham A.-L."/>
            <person name="Ceppi M."/>
            <person name="Conseiller E."/>
            <person name="Debuchy R."/>
            <person name="Malagnac F."/>
            <person name="Goarin A."/>
            <person name="Silar P."/>
            <person name="Lacoste S."/>
            <person name="Sallet E."/>
            <person name="Bensimon A."/>
            <person name="Giraud T."/>
            <person name="Brygoo Y."/>
        </authorList>
    </citation>
    <scope>NUCLEOTIDE SEQUENCE [LARGE SCALE GENOMIC DNA]</scope>
    <source>
        <strain>FM 013</strain>
    </source>
</reference>
<dbReference type="EMBL" id="AY940453">
    <property type="protein sequence ID" value="AAX37259.1"/>
    <property type="molecule type" value="Genomic_DNA"/>
</dbReference>
<dbReference type="EMBL" id="HG793161">
    <property type="protein sequence ID" value="CRL28523.1"/>
    <property type="molecule type" value="Genomic_DNA"/>
</dbReference>
<dbReference type="SMR" id="Q58L83"/>
<dbReference type="OrthoDB" id="654211at2759"/>
<dbReference type="Proteomes" id="UP000053732">
    <property type="component" value="Unassembled WGS sequence"/>
</dbReference>
<dbReference type="GO" id="GO:0000785">
    <property type="term" value="C:chromatin"/>
    <property type="evidence" value="ECO:0007669"/>
    <property type="project" value="TreeGrafter"/>
</dbReference>
<dbReference type="GO" id="GO:0005634">
    <property type="term" value="C:nucleus"/>
    <property type="evidence" value="ECO:0007669"/>
    <property type="project" value="UniProtKB-SubCell"/>
</dbReference>
<dbReference type="GO" id="GO:0005667">
    <property type="term" value="C:transcription regulator complex"/>
    <property type="evidence" value="ECO:0007669"/>
    <property type="project" value="TreeGrafter"/>
</dbReference>
<dbReference type="GO" id="GO:0000981">
    <property type="term" value="F:DNA-binding transcription factor activity, RNA polymerase II-specific"/>
    <property type="evidence" value="ECO:0007669"/>
    <property type="project" value="TreeGrafter"/>
</dbReference>
<dbReference type="GO" id="GO:0000978">
    <property type="term" value="F:RNA polymerase II cis-regulatory region sequence-specific DNA binding"/>
    <property type="evidence" value="ECO:0007669"/>
    <property type="project" value="TreeGrafter"/>
</dbReference>
<dbReference type="GO" id="GO:0008270">
    <property type="term" value="F:zinc ion binding"/>
    <property type="evidence" value="ECO:0007669"/>
    <property type="project" value="UniProtKB-KW"/>
</dbReference>
<dbReference type="GO" id="GO:0048315">
    <property type="term" value="P:conidium formation"/>
    <property type="evidence" value="ECO:0007669"/>
    <property type="project" value="UniProtKB-KW"/>
</dbReference>
<dbReference type="GO" id="GO:0030435">
    <property type="term" value="P:sporulation resulting in formation of a cellular spore"/>
    <property type="evidence" value="ECO:0007669"/>
    <property type="project" value="UniProtKB-KW"/>
</dbReference>
<dbReference type="FunFam" id="3.30.160.60:FF:000845">
    <property type="entry name" value="C2H2 type conidiation transcription factor BrlA"/>
    <property type="match status" value="1"/>
</dbReference>
<dbReference type="Gene3D" id="3.30.160.60">
    <property type="entry name" value="Classic Zinc Finger"/>
    <property type="match status" value="2"/>
</dbReference>
<dbReference type="InterPro" id="IPR036236">
    <property type="entry name" value="Znf_C2H2_sf"/>
</dbReference>
<dbReference type="InterPro" id="IPR013087">
    <property type="entry name" value="Znf_C2H2_type"/>
</dbReference>
<dbReference type="PANTHER" id="PTHR14003">
    <property type="entry name" value="TRANSCRIPTIONAL REPRESSOR PROTEIN YY"/>
    <property type="match status" value="1"/>
</dbReference>
<dbReference type="PANTHER" id="PTHR14003:SF19">
    <property type="entry name" value="YY2 TRANSCRIPTION FACTOR"/>
    <property type="match status" value="1"/>
</dbReference>
<dbReference type="Pfam" id="PF00096">
    <property type="entry name" value="zf-C2H2"/>
    <property type="match status" value="2"/>
</dbReference>
<dbReference type="SMART" id="SM00355">
    <property type="entry name" value="ZnF_C2H2"/>
    <property type="match status" value="2"/>
</dbReference>
<dbReference type="SUPFAM" id="SSF57667">
    <property type="entry name" value="beta-beta-alpha zinc fingers"/>
    <property type="match status" value="1"/>
</dbReference>
<dbReference type="PROSITE" id="PS00028">
    <property type="entry name" value="ZINC_FINGER_C2H2_1"/>
    <property type="match status" value="2"/>
</dbReference>
<dbReference type="PROSITE" id="PS50157">
    <property type="entry name" value="ZINC_FINGER_C2H2_2"/>
    <property type="match status" value="2"/>
</dbReference>
<accession>Q58L83</accession>
<accession>A0A0G4PQS8</accession>
<sequence length="433" mass="49070">MRSHGQQISDRLTVEVDCHSLGPSECPSMTSSFSPLDSPTPTPTSLYSQGSMASPGWHEHPHYHHGVPMERRTSATPLRSAFRMADITSGDAMMNMPCGNMDRQDQMALPDYLPAYEENVDQLWIPQDMPKTYQEPQFPYHASMSQYNQMARNYYHRPQQAGYLPESASNPCLSRPIFTQPTERMPNSASMTNMLHWMPSHESLVPQTITPAQVQPFPSGPVTPPSSSYSDFPTNIPTFKSHTPSTPHRSVSMGTPSGSDTPVSRMSGHNDYQEEFQLSPVYREGMMQRHRQPSRKSSKKQLLRSNLSLENLPSIIKQVQFKCKEPGCKGRFKRQEHLKRHMKSHSKEKPHVCWVPGCHRAFSRSDNLNAHYTKTHSKRGGRNRYVATLDETSQDFDPDFRGQLTPDGRPIYGSKLEDSMPDCGELSVDGWDD</sequence>
<protein>
    <recommendedName>
        <fullName evidence="7">C2H2 type master regulator of conidiophore development brlA</fullName>
    </recommendedName>
</protein>
<keyword id="KW-0010">Activator</keyword>
<keyword id="KW-0183">Conidiation</keyword>
<keyword id="KW-0238">DNA-binding</keyword>
<keyword id="KW-0479">Metal-binding</keyword>
<keyword id="KW-0539">Nucleus</keyword>
<keyword id="KW-1185">Reference proteome</keyword>
<keyword id="KW-0677">Repeat</keyword>
<keyword id="KW-0749">Sporulation</keyword>
<keyword id="KW-0804">Transcription</keyword>
<keyword id="KW-0805">Transcription regulation</keyword>
<keyword id="KW-0862">Zinc</keyword>
<keyword id="KW-0863">Zinc-finger</keyword>
<evidence type="ECO:0000250" key="1">
    <source>
        <dbReference type="UniProtKB" id="P10069"/>
    </source>
</evidence>
<evidence type="ECO:0000250" key="2">
    <source>
        <dbReference type="UniProtKB" id="P22022"/>
    </source>
</evidence>
<evidence type="ECO:0000255" key="3">
    <source>
        <dbReference type="PROSITE-ProRule" id="PRU00042"/>
    </source>
</evidence>
<evidence type="ECO:0000256" key="4">
    <source>
        <dbReference type="SAM" id="MobiDB-lite"/>
    </source>
</evidence>
<evidence type="ECO:0000269" key="5">
    <source>
    </source>
</evidence>
<evidence type="ECO:0000303" key="6">
    <source>
    </source>
</evidence>
<evidence type="ECO:0000305" key="7"/>
<organism>
    <name type="scientific">Penicillium camemberti (strain FM 013)</name>
    <dbReference type="NCBI Taxonomy" id="1429867"/>
    <lineage>
        <taxon>Eukaryota</taxon>
        <taxon>Fungi</taxon>
        <taxon>Dikarya</taxon>
        <taxon>Ascomycota</taxon>
        <taxon>Pezizomycotina</taxon>
        <taxon>Eurotiomycetes</taxon>
        <taxon>Eurotiomycetidae</taxon>
        <taxon>Eurotiales</taxon>
        <taxon>Aspergillaceae</taxon>
        <taxon>Penicillium</taxon>
    </lineage>
</organism>
<comment type="function">
    <text evidence="2">BrlA, abaA and wetA are pivotal regulators of conidiophore development and conidium maturation (By similarity). They act individually and together to regulate their own expression and that of numerous other sporulation-specific genes (By similarity). Binds promoters of target genes at brlA response elements (BREs) containing the conserved sequence 5'-(C/A)(A/G)AGGG(G/A)-3' (By similarity).</text>
</comment>
<comment type="subcellular location">
    <subcellularLocation>
        <location evidence="1">Nucleus</location>
    </subcellularLocation>
</comment>
<comment type="induction">
    <text evidence="5">A huge increase in expression is observed between the fourth and fifth day for solid and liquid cultures (PubMed:18093806).</text>
</comment>
<feature type="chain" id="PRO_0000435949" description="C2H2 type master regulator of conidiophore development brlA">
    <location>
        <begin position="1"/>
        <end position="433"/>
    </location>
</feature>
<feature type="zinc finger region" description="C2H2-type 1" evidence="3">
    <location>
        <begin position="321"/>
        <end position="345"/>
    </location>
</feature>
<feature type="zinc finger region" description="C2H2-type 2" evidence="3">
    <location>
        <begin position="351"/>
        <end position="376"/>
    </location>
</feature>
<feature type="region of interest" description="Disordered" evidence="4">
    <location>
        <begin position="23"/>
        <end position="54"/>
    </location>
</feature>
<feature type="region of interest" description="Disordered" evidence="4">
    <location>
        <begin position="238"/>
        <end position="268"/>
    </location>
</feature>
<feature type="region of interest" description="Disordered" evidence="4">
    <location>
        <begin position="391"/>
        <end position="423"/>
    </location>
</feature>
<feature type="compositionally biased region" description="Low complexity" evidence="4">
    <location>
        <begin position="30"/>
        <end position="48"/>
    </location>
</feature>
<feature type="compositionally biased region" description="Polar residues" evidence="4">
    <location>
        <begin position="238"/>
        <end position="264"/>
    </location>
</feature>
<proteinExistence type="evidence at transcript level"/>